<evidence type="ECO:0000255" key="1">
    <source>
        <dbReference type="HAMAP-Rule" id="MF_00354"/>
    </source>
</evidence>
<gene>
    <name evidence="1" type="primary">fni</name>
    <name type="ordered locus">RrIowa_0882</name>
</gene>
<protein>
    <recommendedName>
        <fullName evidence="1">Isopentenyl-diphosphate delta-isomerase</fullName>
        <shortName evidence="1">IPP isomerase</shortName>
        <ecNumber evidence="1">5.3.3.2</ecNumber>
    </recommendedName>
    <alternativeName>
        <fullName evidence="1">Isopentenyl diphosphate:dimethylallyl diphosphate isomerase</fullName>
    </alternativeName>
    <alternativeName>
        <fullName evidence="1">Isopentenyl pyrophosphate isomerase</fullName>
    </alternativeName>
    <alternativeName>
        <fullName evidence="1">Type 2 isopentenyl diphosphate isomerase</fullName>
        <shortName evidence="1">IDI-2</shortName>
    </alternativeName>
</protein>
<name>IDI2_RICRO</name>
<feature type="chain" id="PRO_1000079382" description="Isopentenyl-diphosphate delta-isomerase">
    <location>
        <begin position="1"/>
        <end position="342"/>
    </location>
</feature>
<feature type="binding site" evidence="1">
    <location>
        <begin position="11"/>
        <end position="12"/>
    </location>
    <ligand>
        <name>substrate</name>
    </ligand>
</feature>
<feature type="binding site" evidence="1">
    <location>
        <position position="68"/>
    </location>
    <ligand>
        <name>FMN</name>
        <dbReference type="ChEBI" id="CHEBI:58210"/>
    </ligand>
</feature>
<feature type="binding site" evidence="1">
    <location>
        <begin position="69"/>
        <end position="71"/>
    </location>
    <ligand>
        <name>FMN</name>
        <dbReference type="ChEBI" id="CHEBI:58210"/>
    </ligand>
</feature>
<feature type="binding site" evidence="1">
    <location>
        <begin position="99"/>
        <end position="101"/>
    </location>
    <ligand>
        <name>substrate</name>
    </ligand>
</feature>
<feature type="binding site" evidence="1">
    <location>
        <position position="99"/>
    </location>
    <ligand>
        <name>FMN</name>
        <dbReference type="ChEBI" id="CHEBI:58210"/>
    </ligand>
</feature>
<feature type="binding site" evidence="1">
    <location>
        <position position="127"/>
    </location>
    <ligand>
        <name>FMN</name>
        <dbReference type="ChEBI" id="CHEBI:58210"/>
    </ligand>
</feature>
<feature type="binding site" evidence="1">
    <location>
        <position position="162"/>
    </location>
    <ligand>
        <name>substrate</name>
    </ligand>
</feature>
<feature type="binding site" evidence="1">
    <location>
        <position position="163"/>
    </location>
    <ligand>
        <name>Mg(2+)</name>
        <dbReference type="ChEBI" id="CHEBI:18420"/>
    </ligand>
</feature>
<feature type="binding site" evidence="1">
    <location>
        <position position="194"/>
    </location>
    <ligand>
        <name>FMN</name>
        <dbReference type="ChEBI" id="CHEBI:58210"/>
    </ligand>
</feature>
<feature type="binding site" evidence="1">
    <location>
        <position position="224"/>
    </location>
    <ligand>
        <name>FMN</name>
        <dbReference type="ChEBI" id="CHEBI:58210"/>
    </ligand>
</feature>
<feature type="binding site" evidence="1">
    <location>
        <begin position="274"/>
        <end position="276"/>
    </location>
    <ligand>
        <name>FMN</name>
        <dbReference type="ChEBI" id="CHEBI:58210"/>
    </ligand>
</feature>
<feature type="binding site" evidence="1">
    <location>
        <begin position="295"/>
        <end position="296"/>
    </location>
    <ligand>
        <name>FMN</name>
        <dbReference type="ChEBI" id="CHEBI:58210"/>
    </ligand>
</feature>
<accession>B0BXY6</accession>
<keyword id="KW-0963">Cytoplasm</keyword>
<keyword id="KW-0285">Flavoprotein</keyword>
<keyword id="KW-0288">FMN</keyword>
<keyword id="KW-0413">Isomerase</keyword>
<keyword id="KW-0414">Isoprene biosynthesis</keyword>
<keyword id="KW-0460">Magnesium</keyword>
<keyword id="KW-0479">Metal-binding</keyword>
<keyword id="KW-0521">NADP</keyword>
<comment type="function">
    <text evidence="1">Involved in the biosynthesis of isoprenoids. Catalyzes the 1,3-allylic rearrangement of the homoallylic substrate isopentenyl (IPP) to its allylic isomer, dimethylallyl diphosphate (DMAPP).</text>
</comment>
<comment type="catalytic activity">
    <reaction evidence="1">
        <text>isopentenyl diphosphate = dimethylallyl diphosphate</text>
        <dbReference type="Rhea" id="RHEA:23284"/>
        <dbReference type="ChEBI" id="CHEBI:57623"/>
        <dbReference type="ChEBI" id="CHEBI:128769"/>
        <dbReference type="EC" id="5.3.3.2"/>
    </reaction>
</comment>
<comment type="cofactor">
    <cofactor evidence="1">
        <name>FMN</name>
        <dbReference type="ChEBI" id="CHEBI:58210"/>
    </cofactor>
</comment>
<comment type="cofactor">
    <cofactor evidence="1">
        <name>NADPH</name>
        <dbReference type="ChEBI" id="CHEBI:57783"/>
    </cofactor>
</comment>
<comment type="cofactor">
    <cofactor evidence="1">
        <name>Mg(2+)</name>
        <dbReference type="ChEBI" id="CHEBI:18420"/>
    </cofactor>
</comment>
<comment type="subunit">
    <text evidence="1">Homooctamer. Dimer of tetramers.</text>
</comment>
<comment type="subcellular location">
    <subcellularLocation>
        <location evidence="1">Cytoplasm</location>
    </subcellularLocation>
</comment>
<comment type="similarity">
    <text evidence="1">Belongs to the IPP isomerase type 2 family.</text>
</comment>
<sequence>MLKDQNLDIERKQDHIEINLTQNVESTLKSGFESIHFIHNALPELNYDSINTTTTFLGKSLQAPILISSMTGGTTRARDINYRLAQVAQKAGIAMGLGSMRVLLTEPDTIKTFAVRHIAPDIPLLANIGAVQLNYGVTPKECQYLVDAIKADALILHLNVLQELTQPEGNRNWEKLLPKIREVVHYLSIPVIVKEVGYGLSKKVAESLIDAGVKVLDIAGSGGTSWSQVEAYRATNSLQNRIASSFINWGIPTLDSLKMVREVSKDIPIITSGGLKSGIDGAKAIRIGANIFGLAGQFLKAADTSESLLFEEIQLIIEQLKITMLCTGSRTLKDLAKAEIRL</sequence>
<reference key="1">
    <citation type="journal article" date="2008" name="Infect. Immun.">
        <title>Genomic comparison of virulent Rickettsia rickettsii Sheila Smith and avirulent Rickettsia rickettsii Iowa.</title>
        <authorList>
            <person name="Ellison D.W."/>
            <person name="Clark T.R."/>
            <person name="Sturdevant D.E."/>
            <person name="Virtaneva K."/>
            <person name="Porcella S.F."/>
            <person name="Hackstadt T."/>
        </authorList>
    </citation>
    <scope>NUCLEOTIDE SEQUENCE [LARGE SCALE GENOMIC DNA]</scope>
    <source>
        <strain>Iowa</strain>
    </source>
</reference>
<proteinExistence type="inferred from homology"/>
<dbReference type="EC" id="5.3.3.2" evidence="1"/>
<dbReference type="EMBL" id="CP000766">
    <property type="protein sequence ID" value="ABY72712.1"/>
    <property type="molecule type" value="Genomic_DNA"/>
</dbReference>
<dbReference type="RefSeq" id="WP_012150923.1">
    <property type="nucleotide sequence ID" value="NC_010263.3"/>
</dbReference>
<dbReference type="SMR" id="B0BXY6"/>
<dbReference type="GeneID" id="79937467"/>
<dbReference type="KEGG" id="rrj:RrIowa_0882"/>
<dbReference type="eggNOG" id="COG1304">
    <property type="taxonomic scope" value="Bacteria"/>
</dbReference>
<dbReference type="HOGENOM" id="CLU_065515_1_0_5"/>
<dbReference type="Proteomes" id="UP000000796">
    <property type="component" value="Chromosome"/>
</dbReference>
<dbReference type="GO" id="GO:0005737">
    <property type="term" value="C:cytoplasm"/>
    <property type="evidence" value="ECO:0007669"/>
    <property type="project" value="UniProtKB-SubCell"/>
</dbReference>
<dbReference type="GO" id="GO:0010181">
    <property type="term" value="F:FMN binding"/>
    <property type="evidence" value="ECO:0007669"/>
    <property type="project" value="UniProtKB-UniRule"/>
</dbReference>
<dbReference type="GO" id="GO:0004452">
    <property type="term" value="F:isopentenyl-diphosphate delta-isomerase activity"/>
    <property type="evidence" value="ECO:0007669"/>
    <property type="project" value="UniProtKB-UniRule"/>
</dbReference>
<dbReference type="GO" id="GO:0000287">
    <property type="term" value="F:magnesium ion binding"/>
    <property type="evidence" value="ECO:0007669"/>
    <property type="project" value="UniProtKB-UniRule"/>
</dbReference>
<dbReference type="GO" id="GO:0070402">
    <property type="term" value="F:NADPH binding"/>
    <property type="evidence" value="ECO:0007669"/>
    <property type="project" value="UniProtKB-UniRule"/>
</dbReference>
<dbReference type="GO" id="GO:0016491">
    <property type="term" value="F:oxidoreductase activity"/>
    <property type="evidence" value="ECO:0007669"/>
    <property type="project" value="InterPro"/>
</dbReference>
<dbReference type="GO" id="GO:0008299">
    <property type="term" value="P:isoprenoid biosynthetic process"/>
    <property type="evidence" value="ECO:0007669"/>
    <property type="project" value="UniProtKB-UniRule"/>
</dbReference>
<dbReference type="CDD" id="cd02811">
    <property type="entry name" value="IDI-2_FMN"/>
    <property type="match status" value="1"/>
</dbReference>
<dbReference type="Gene3D" id="3.20.20.70">
    <property type="entry name" value="Aldolase class I"/>
    <property type="match status" value="1"/>
</dbReference>
<dbReference type="HAMAP" id="MF_00354">
    <property type="entry name" value="Idi_2"/>
    <property type="match status" value="1"/>
</dbReference>
<dbReference type="InterPro" id="IPR013785">
    <property type="entry name" value="Aldolase_TIM"/>
</dbReference>
<dbReference type="InterPro" id="IPR000262">
    <property type="entry name" value="FMN-dep_DH"/>
</dbReference>
<dbReference type="InterPro" id="IPR011179">
    <property type="entry name" value="IPdP_isomerase"/>
</dbReference>
<dbReference type="NCBIfam" id="TIGR02151">
    <property type="entry name" value="IPP_isom_2"/>
    <property type="match status" value="1"/>
</dbReference>
<dbReference type="PANTHER" id="PTHR43665">
    <property type="entry name" value="ISOPENTENYL-DIPHOSPHATE DELTA-ISOMERASE"/>
    <property type="match status" value="1"/>
</dbReference>
<dbReference type="PANTHER" id="PTHR43665:SF1">
    <property type="entry name" value="ISOPENTENYL-DIPHOSPHATE DELTA-ISOMERASE"/>
    <property type="match status" value="1"/>
</dbReference>
<dbReference type="Pfam" id="PF01070">
    <property type="entry name" value="FMN_dh"/>
    <property type="match status" value="2"/>
</dbReference>
<dbReference type="PIRSF" id="PIRSF003314">
    <property type="entry name" value="IPP_isomerase"/>
    <property type="match status" value="1"/>
</dbReference>
<dbReference type="SUPFAM" id="SSF51395">
    <property type="entry name" value="FMN-linked oxidoreductases"/>
    <property type="match status" value="1"/>
</dbReference>
<organism>
    <name type="scientific">Rickettsia rickettsii (strain Iowa)</name>
    <dbReference type="NCBI Taxonomy" id="452659"/>
    <lineage>
        <taxon>Bacteria</taxon>
        <taxon>Pseudomonadati</taxon>
        <taxon>Pseudomonadota</taxon>
        <taxon>Alphaproteobacteria</taxon>
        <taxon>Rickettsiales</taxon>
        <taxon>Rickettsiaceae</taxon>
        <taxon>Rickettsieae</taxon>
        <taxon>Rickettsia</taxon>
        <taxon>spotted fever group</taxon>
    </lineage>
</organism>